<reference key="1">
    <citation type="journal article" date="2003" name="Lancet">
        <title>Genome sequence of Vibrio parahaemolyticus: a pathogenic mechanism distinct from that of V. cholerae.</title>
        <authorList>
            <person name="Makino K."/>
            <person name="Oshima K."/>
            <person name="Kurokawa K."/>
            <person name="Yokoyama K."/>
            <person name="Uda T."/>
            <person name="Tagomori K."/>
            <person name="Iijima Y."/>
            <person name="Najima M."/>
            <person name="Nakano M."/>
            <person name="Yamashita A."/>
            <person name="Kubota Y."/>
            <person name="Kimura S."/>
            <person name="Yasunaga T."/>
            <person name="Honda T."/>
            <person name="Shinagawa H."/>
            <person name="Hattori M."/>
            <person name="Iida T."/>
        </authorList>
    </citation>
    <scope>NUCLEOTIDE SEQUENCE [LARGE SCALE GENOMIC DNA]</scope>
    <source>
        <strain>RIMD 2210633</strain>
    </source>
</reference>
<dbReference type="EC" id="3.6.1.54" evidence="1"/>
<dbReference type="EMBL" id="BA000031">
    <property type="protein sequence ID" value="BAC59411.1"/>
    <property type="molecule type" value="Genomic_DNA"/>
</dbReference>
<dbReference type="RefSeq" id="NP_797527.1">
    <property type="nucleotide sequence ID" value="NC_004603.1"/>
</dbReference>
<dbReference type="RefSeq" id="WP_005489008.1">
    <property type="nucleotide sequence ID" value="NC_004603.1"/>
</dbReference>
<dbReference type="SMR" id="Q87QK1"/>
<dbReference type="GeneID" id="1188653"/>
<dbReference type="KEGG" id="vpa:VP1148"/>
<dbReference type="PATRIC" id="fig|223926.6.peg.1089"/>
<dbReference type="eggNOG" id="COG2908">
    <property type="taxonomic scope" value="Bacteria"/>
</dbReference>
<dbReference type="HOGENOM" id="CLU_074586_0_0_6"/>
<dbReference type="UniPathway" id="UPA00359">
    <property type="reaction ID" value="UER00480"/>
</dbReference>
<dbReference type="Proteomes" id="UP000002493">
    <property type="component" value="Chromosome 1"/>
</dbReference>
<dbReference type="GO" id="GO:0005737">
    <property type="term" value="C:cytoplasm"/>
    <property type="evidence" value="ECO:0007669"/>
    <property type="project" value="InterPro"/>
</dbReference>
<dbReference type="GO" id="GO:0019897">
    <property type="term" value="C:extrinsic component of plasma membrane"/>
    <property type="evidence" value="ECO:0007669"/>
    <property type="project" value="UniProtKB-UniRule"/>
</dbReference>
<dbReference type="GO" id="GO:0030145">
    <property type="term" value="F:manganese ion binding"/>
    <property type="evidence" value="ECO:0007669"/>
    <property type="project" value="UniProtKB-UniRule"/>
</dbReference>
<dbReference type="GO" id="GO:0008758">
    <property type="term" value="F:UDP-2,3-diacylglucosamine hydrolase activity"/>
    <property type="evidence" value="ECO:0007669"/>
    <property type="project" value="UniProtKB-UniRule"/>
</dbReference>
<dbReference type="GO" id="GO:0009245">
    <property type="term" value="P:lipid A biosynthetic process"/>
    <property type="evidence" value="ECO:0007669"/>
    <property type="project" value="UniProtKB-UniRule"/>
</dbReference>
<dbReference type="CDD" id="cd07398">
    <property type="entry name" value="MPP_YbbF-LpxH"/>
    <property type="match status" value="1"/>
</dbReference>
<dbReference type="Gene3D" id="3.60.21.10">
    <property type="match status" value="1"/>
</dbReference>
<dbReference type="HAMAP" id="MF_00575">
    <property type="entry name" value="LpxH"/>
    <property type="match status" value="1"/>
</dbReference>
<dbReference type="InterPro" id="IPR004843">
    <property type="entry name" value="Calcineurin-like_PHP_ApaH"/>
</dbReference>
<dbReference type="InterPro" id="IPR043461">
    <property type="entry name" value="LpxH-like"/>
</dbReference>
<dbReference type="InterPro" id="IPR029052">
    <property type="entry name" value="Metallo-depent_PP-like"/>
</dbReference>
<dbReference type="InterPro" id="IPR010138">
    <property type="entry name" value="UDP-diacylglucosamine_Hdrlase"/>
</dbReference>
<dbReference type="NCBIfam" id="TIGR01854">
    <property type="entry name" value="lipid_A_lpxH"/>
    <property type="match status" value="1"/>
</dbReference>
<dbReference type="NCBIfam" id="NF003743">
    <property type="entry name" value="PRK05340.1"/>
    <property type="match status" value="1"/>
</dbReference>
<dbReference type="PANTHER" id="PTHR34990:SF1">
    <property type="entry name" value="UDP-2,3-DIACYLGLUCOSAMINE HYDROLASE"/>
    <property type="match status" value="1"/>
</dbReference>
<dbReference type="PANTHER" id="PTHR34990">
    <property type="entry name" value="UDP-2,3-DIACYLGLUCOSAMINE HYDROLASE-RELATED"/>
    <property type="match status" value="1"/>
</dbReference>
<dbReference type="Pfam" id="PF00149">
    <property type="entry name" value="Metallophos"/>
    <property type="match status" value="1"/>
</dbReference>
<dbReference type="SUPFAM" id="SSF56300">
    <property type="entry name" value="Metallo-dependent phosphatases"/>
    <property type="match status" value="1"/>
</dbReference>
<comment type="function">
    <text evidence="1">Hydrolyzes the pyrophosphate bond of UDP-2,3-diacylglucosamine to yield 2,3-diacylglucosamine 1-phosphate (lipid X) and UMP by catalyzing the attack of water at the alpha-P atom. Involved in the biosynthesis of lipid A, a phosphorylated glycolipid that anchors the lipopolysaccharide to the outer membrane of the cell.</text>
</comment>
<comment type="catalytic activity">
    <reaction evidence="1">
        <text>UDP-2-N,3-O-bis[(3R)-3-hydroxytetradecanoyl]-alpha-D-glucosamine + H2O = 2-N,3-O-bis[(3R)-3-hydroxytetradecanoyl]-alpha-D-glucosaminyl 1-phosphate + UMP + 2 H(+)</text>
        <dbReference type="Rhea" id="RHEA:25213"/>
        <dbReference type="ChEBI" id="CHEBI:15377"/>
        <dbReference type="ChEBI" id="CHEBI:15378"/>
        <dbReference type="ChEBI" id="CHEBI:57865"/>
        <dbReference type="ChEBI" id="CHEBI:57957"/>
        <dbReference type="ChEBI" id="CHEBI:78847"/>
        <dbReference type="EC" id="3.6.1.54"/>
    </reaction>
</comment>
<comment type="cofactor">
    <cofactor evidence="1">
        <name>Mn(2+)</name>
        <dbReference type="ChEBI" id="CHEBI:29035"/>
    </cofactor>
    <text evidence="1">Binds 2 Mn(2+) ions per subunit in a binuclear metal center.</text>
</comment>
<comment type="pathway">
    <text evidence="1">Glycolipid biosynthesis; lipid IV(A) biosynthesis; lipid IV(A) from (3R)-3-hydroxytetradecanoyl-[acyl-carrier-protein] and UDP-N-acetyl-alpha-D-glucosamine: step 4/6.</text>
</comment>
<comment type="subcellular location">
    <subcellularLocation>
        <location evidence="1">Cell inner membrane</location>
        <topology evidence="1">Peripheral membrane protein</topology>
        <orientation evidence="1">Cytoplasmic side</orientation>
    </subcellularLocation>
</comment>
<comment type="similarity">
    <text evidence="1">Belongs to the LpxH family.</text>
</comment>
<proteinExistence type="inferred from homology"/>
<accession>Q87QK1</accession>
<organism>
    <name type="scientific">Vibrio parahaemolyticus serotype O3:K6 (strain RIMD 2210633)</name>
    <dbReference type="NCBI Taxonomy" id="223926"/>
    <lineage>
        <taxon>Bacteria</taxon>
        <taxon>Pseudomonadati</taxon>
        <taxon>Pseudomonadota</taxon>
        <taxon>Gammaproteobacteria</taxon>
        <taxon>Vibrionales</taxon>
        <taxon>Vibrionaceae</taxon>
        <taxon>Vibrio</taxon>
    </lineage>
</organism>
<sequence length="242" mass="28051">MTTLFISDLHLTPSRPDITECFITFMRTEAKNAEALYVLGDLFEFWVGDDDKTPFANQIRTEFKALTDQGVPVFFIQGNRDFLLGERFCKETGITLLDDVCTIDLYGTKAVILHGDTLCIDDVEYQKFRKTVHQPWLQWIFKRIPWYLKKKIVSKVQSDIRDDKQMKSLDIMDVNQSEVEKVMSQNCVNLMIHGHTHRPNTHFFDANGAKNTRIVLGDWYTQGSVLQVNSDGFELQNRPFNT</sequence>
<protein>
    <recommendedName>
        <fullName evidence="1">UDP-2,3-diacylglucosamine hydrolase</fullName>
        <ecNumber evidence="1">3.6.1.54</ecNumber>
    </recommendedName>
    <alternativeName>
        <fullName evidence="1">UDP-2,3-diacylglucosamine diphosphatase</fullName>
    </alternativeName>
</protein>
<name>LPXH_VIBPA</name>
<gene>
    <name evidence="1" type="primary">lpxH</name>
    <name type="ordered locus">VP1148</name>
</gene>
<keyword id="KW-0997">Cell inner membrane</keyword>
<keyword id="KW-1003">Cell membrane</keyword>
<keyword id="KW-0378">Hydrolase</keyword>
<keyword id="KW-0441">Lipid A biosynthesis</keyword>
<keyword id="KW-0444">Lipid biosynthesis</keyword>
<keyword id="KW-0443">Lipid metabolism</keyword>
<keyword id="KW-0464">Manganese</keyword>
<keyword id="KW-0472">Membrane</keyword>
<keyword id="KW-0479">Metal-binding</keyword>
<evidence type="ECO:0000255" key="1">
    <source>
        <dbReference type="HAMAP-Rule" id="MF_00575"/>
    </source>
</evidence>
<feature type="chain" id="PRO_0000214126" description="UDP-2,3-diacylglucosamine hydrolase">
    <location>
        <begin position="1"/>
        <end position="242"/>
    </location>
</feature>
<feature type="binding site" evidence="1">
    <location>
        <position position="8"/>
    </location>
    <ligand>
        <name>Mn(2+)</name>
        <dbReference type="ChEBI" id="CHEBI:29035"/>
        <label>1</label>
    </ligand>
</feature>
<feature type="binding site" evidence="1">
    <location>
        <position position="10"/>
    </location>
    <ligand>
        <name>Mn(2+)</name>
        <dbReference type="ChEBI" id="CHEBI:29035"/>
        <label>1</label>
    </ligand>
</feature>
<feature type="binding site" evidence="1">
    <location>
        <position position="41"/>
    </location>
    <ligand>
        <name>Mn(2+)</name>
        <dbReference type="ChEBI" id="CHEBI:29035"/>
        <label>1</label>
    </ligand>
</feature>
<feature type="binding site" evidence="1">
    <location>
        <position position="41"/>
    </location>
    <ligand>
        <name>Mn(2+)</name>
        <dbReference type="ChEBI" id="CHEBI:29035"/>
        <label>2</label>
    </ligand>
</feature>
<feature type="binding site" evidence="1">
    <location>
        <begin position="79"/>
        <end position="80"/>
    </location>
    <ligand>
        <name>substrate</name>
    </ligand>
</feature>
<feature type="binding site" evidence="1">
    <location>
        <position position="79"/>
    </location>
    <ligand>
        <name>Mn(2+)</name>
        <dbReference type="ChEBI" id="CHEBI:29035"/>
        <label>2</label>
    </ligand>
</feature>
<feature type="binding site" evidence="1">
    <location>
        <position position="114"/>
    </location>
    <ligand>
        <name>Mn(2+)</name>
        <dbReference type="ChEBI" id="CHEBI:29035"/>
        <label>2</label>
    </ligand>
</feature>
<feature type="binding site" evidence="1">
    <location>
        <position position="122"/>
    </location>
    <ligand>
        <name>substrate</name>
    </ligand>
</feature>
<feature type="binding site" evidence="1">
    <location>
        <position position="164"/>
    </location>
    <ligand>
        <name>substrate</name>
    </ligand>
</feature>
<feature type="binding site" evidence="1">
    <location>
        <position position="167"/>
    </location>
    <ligand>
        <name>substrate</name>
    </ligand>
</feature>
<feature type="binding site" evidence="1">
    <location>
        <position position="195"/>
    </location>
    <ligand>
        <name>Mn(2+)</name>
        <dbReference type="ChEBI" id="CHEBI:29035"/>
        <label>2</label>
    </ligand>
</feature>
<feature type="binding site" evidence="1">
    <location>
        <position position="195"/>
    </location>
    <ligand>
        <name>substrate</name>
    </ligand>
</feature>
<feature type="binding site" evidence="1">
    <location>
        <position position="197"/>
    </location>
    <ligand>
        <name>Mn(2+)</name>
        <dbReference type="ChEBI" id="CHEBI:29035"/>
        <label>1</label>
    </ligand>
</feature>